<comment type="function">
    <text>Catalyzes the concomitant phosphorylation of a threonine and a tyrosine residue in a Thr-Glu-Tyr sequence located in MAP kinases.</text>
</comment>
<comment type="catalytic activity">
    <reaction>
        <text>L-seryl-[protein] + ATP = O-phospho-L-seryl-[protein] + ADP + H(+)</text>
        <dbReference type="Rhea" id="RHEA:17989"/>
        <dbReference type="Rhea" id="RHEA-COMP:9863"/>
        <dbReference type="Rhea" id="RHEA-COMP:11604"/>
        <dbReference type="ChEBI" id="CHEBI:15378"/>
        <dbReference type="ChEBI" id="CHEBI:29999"/>
        <dbReference type="ChEBI" id="CHEBI:30616"/>
        <dbReference type="ChEBI" id="CHEBI:83421"/>
        <dbReference type="ChEBI" id="CHEBI:456216"/>
        <dbReference type="EC" id="2.7.12.2"/>
    </reaction>
</comment>
<comment type="catalytic activity">
    <reaction>
        <text>L-threonyl-[protein] + ATP = O-phospho-L-threonyl-[protein] + ADP + H(+)</text>
        <dbReference type="Rhea" id="RHEA:46608"/>
        <dbReference type="Rhea" id="RHEA-COMP:11060"/>
        <dbReference type="Rhea" id="RHEA-COMP:11605"/>
        <dbReference type="ChEBI" id="CHEBI:15378"/>
        <dbReference type="ChEBI" id="CHEBI:30013"/>
        <dbReference type="ChEBI" id="CHEBI:30616"/>
        <dbReference type="ChEBI" id="CHEBI:61977"/>
        <dbReference type="ChEBI" id="CHEBI:456216"/>
        <dbReference type="EC" id="2.7.12.2"/>
    </reaction>
</comment>
<comment type="catalytic activity">
    <reaction>
        <text>L-tyrosyl-[protein] + ATP = O-phospho-L-tyrosyl-[protein] + ADP + H(+)</text>
        <dbReference type="Rhea" id="RHEA:10596"/>
        <dbReference type="Rhea" id="RHEA-COMP:10136"/>
        <dbReference type="Rhea" id="RHEA-COMP:20101"/>
        <dbReference type="ChEBI" id="CHEBI:15378"/>
        <dbReference type="ChEBI" id="CHEBI:30616"/>
        <dbReference type="ChEBI" id="CHEBI:46858"/>
        <dbReference type="ChEBI" id="CHEBI:61978"/>
        <dbReference type="ChEBI" id="CHEBI:456216"/>
        <dbReference type="EC" id="2.7.12.2"/>
    </reaction>
</comment>
<comment type="PTM">
    <text>Activated by phosphorylation on Ser/Thr catalyzed by MAP kinase kinase kinases.</text>
</comment>
<comment type="similarity">
    <text evidence="2">Belongs to the protein kinase superfamily. STE Ser/Thr protein kinase family. MAP kinase kinase subfamily.</text>
</comment>
<name>MP2K3_XENLA</name>
<sequence length="62" mass="6666">GKIAVSIVKALEHLHSKLSVIHRDVKPSNVLINKEGQVNMCDFGISGYLVDSVAKTMDAGCK</sequence>
<organism>
    <name type="scientific">Xenopus laevis</name>
    <name type="common">African clawed frog</name>
    <dbReference type="NCBI Taxonomy" id="8355"/>
    <lineage>
        <taxon>Eukaryota</taxon>
        <taxon>Metazoa</taxon>
        <taxon>Chordata</taxon>
        <taxon>Craniata</taxon>
        <taxon>Vertebrata</taxon>
        <taxon>Euteleostomi</taxon>
        <taxon>Amphibia</taxon>
        <taxon>Batrachia</taxon>
        <taxon>Anura</taxon>
        <taxon>Pipoidea</taxon>
        <taxon>Pipidae</taxon>
        <taxon>Xenopodinae</taxon>
        <taxon>Xenopus</taxon>
        <taxon>Xenopus</taxon>
    </lineage>
</organism>
<feature type="chain" id="PRO_0000086380" description="Dual specificity mitogen-activated protein kinase kinase 3">
    <location>
        <begin position="1" status="less than"/>
        <end position="62" status="greater than"/>
    </location>
</feature>
<feature type="domain" description="Protein kinase" evidence="1">
    <location>
        <begin position="1" status="less than"/>
        <end position="62" status="greater than"/>
    </location>
</feature>
<feature type="non-terminal residue">
    <location>
        <position position="1"/>
    </location>
</feature>
<feature type="non-terminal residue">
    <location>
        <position position="62"/>
    </location>
</feature>
<dbReference type="EC" id="2.7.12.2"/>
<dbReference type="SMR" id="P39746"/>
<dbReference type="Proteomes" id="UP000186698">
    <property type="component" value="Unplaced"/>
</dbReference>
<dbReference type="GO" id="GO:0005524">
    <property type="term" value="F:ATP binding"/>
    <property type="evidence" value="ECO:0007669"/>
    <property type="project" value="UniProtKB-KW"/>
</dbReference>
<dbReference type="GO" id="GO:0004708">
    <property type="term" value="F:MAP kinase kinase activity"/>
    <property type="evidence" value="ECO:0007669"/>
    <property type="project" value="UniProtKB-EC"/>
</dbReference>
<dbReference type="GO" id="GO:0106310">
    <property type="term" value="F:protein serine kinase activity"/>
    <property type="evidence" value="ECO:0007669"/>
    <property type="project" value="RHEA"/>
</dbReference>
<dbReference type="GO" id="GO:0004674">
    <property type="term" value="F:protein serine/threonine kinase activity"/>
    <property type="evidence" value="ECO:0007669"/>
    <property type="project" value="UniProtKB-KW"/>
</dbReference>
<dbReference type="GO" id="GO:0004713">
    <property type="term" value="F:protein tyrosine kinase activity"/>
    <property type="evidence" value="ECO:0007669"/>
    <property type="project" value="UniProtKB-KW"/>
</dbReference>
<dbReference type="Gene3D" id="1.10.510.10">
    <property type="entry name" value="Transferase(Phosphotransferase) domain 1"/>
    <property type="match status" value="1"/>
</dbReference>
<dbReference type="InterPro" id="IPR011009">
    <property type="entry name" value="Kinase-like_dom_sf"/>
</dbReference>
<dbReference type="InterPro" id="IPR000719">
    <property type="entry name" value="Prot_kinase_dom"/>
</dbReference>
<dbReference type="InterPro" id="IPR008271">
    <property type="entry name" value="Ser/Thr_kinase_AS"/>
</dbReference>
<dbReference type="PANTHER" id="PTHR48013">
    <property type="entry name" value="DUAL SPECIFICITY MITOGEN-ACTIVATED PROTEIN KINASE KINASE 5-RELATED"/>
    <property type="match status" value="1"/>
</dbReference>
<dbReference type="PANTHER" id="PTHR48013:SF11">
    <property type="entry name" value="LICORNE"/>
    <property type="match status" value="1"/>
</dbReference>
<dbReference type="Pfam" id="PF00069">
    <property type="entry name" value="Pkinase"/>
    <property type="match status" value="1"/>
</dbReference>
<dbReference type="SUPFAM" id="SSF56112">
    <property type="entry name" value="Protein kinase-like (PK-like)"/>
    <property type="match status" value="1"/>
</dbReference>
<dbReference type="PROSITE" id="PS50011">
    <property type="entry name" value="PROTEIN_KINASE_DOM"/>
    <property type="match status" value="1"/>
</dbReference>
<dbReference type="PROSITE" id="PS00108">
    <property type="entry name" value="PROTEIN_KINASE_ST"/>
    <property type="match status" value="1"/>
</dbReference>
<evidence type="ECO:0000255" key="1">
    <source>
        <dbReference type="PROSITE-ProRule" id="PRU00159"/>
    </source>
</evidence>
<evidence type="ECO:0000305" key="2"/>
<protein>
    <recommendedName>
        <fullName>Dual specificity mitogen-activated protein kinase kinase 3</fullName>
        <shortName>MAP kinase kinase 3</shortName>
        <shortName>MAPKK 3</shortName>
        <ecNumber>2.7.12.2</ecNumber>
    </recommendedName>
    <alternativeName>
        <fullName>MAPK-ERK kinase 3</fullName>
    </alternativeName>
</protein>
<accession>P39746</accession>
<keyword id="KW-0067">ATP-binding</keyword>
<keyword id="KW-0418">Kinase</keyword>
<keyword id="KW-0547">Nucleotide-binding</keyword>
<keyword id="KW-0597">Phosphoprotein</keyword>
<keyword id="KW-1185">Reference proteome</keyword>
<keyword id="KW-0723">Serine/threonine-protein kinase</keyword>
<keyword id="KW-0808">Transferase</keyword>
<keyword id="KW-0829">Tyrosine-protein kinase</keyword>
<proteinExistence type="inferred from homology"/>
<gene>
    <name type="primary">map2k3</name>
    <name type="synonym">mek3</name>
</gene>
<reference key="1">
    <citation type="journal article" date="1993" name="Mol. Cell. Biol.">
        <title>Novel members of the mitogen-activated protein kinase activator family in Xenopus laevis.</title>
        <authorList>
            <person name="Yashar B.M."/>
            <person name="Kelley C."/>
            <person name="Yee K."/>
            <person name="Errede B."/>
            <person name="Zon L.I."/>
        </authorList>
    </citation>
    <scope>NUCLEOTIDE SEQUENCE</scope>
    <source>
        <tissue>Embryo</tissue>
    </source>
</reference>